<feature type="chain" id="PRO_1000077348" description="Threonine--tRNA ligase">
    <location>
        <begin position="1"/>
        <end position="658"/>
    </location>
</feature>
<feature type="domain" description="TGS" evidence="2">
    <location>
        <begin position="1"/>
        <end position="64"/>
    </location>
</feature>
<feature type="region of interest" description="Catalytic" evidence="1">
    <location>
        <begin position="246"/>
        <end position="548"/>
    </location>
</feature>
<feature type="binding site" evidence="1">
    <location>
        <position position="343"/>
    </location>
    <ligand>
        <name>Zn(2+)</name>
        <dbReference type="ChEBI" id="CHEBI:29105"/>
    </ligand>
</feature>
<feature type="binding site" evidence="1">
    <location>
        <position position="394"/>
    </location>
    <ligand>
        <name>Zn(2+)</name>
        <dbReference type="ChEBI" id="CHEBI:29105"/>
    </ligand>
</feature>
<feature type="binding site" evidence="1">
    <location>
        <position position="525"/>
    </location>
    <ligand>
        <name>Zn(2+)</name>
        <dbReference type="ChEBI" id="CHEBI:29105"/>
    </ligand>
</feature>
<evidence type="ECO:0000255" key="1">
    <source>
        <dbReference type="HAMAP-Rule" id="MF_00184"/>
    </source>
</evidence>
<evidence type="ECO:0000255" key="2">
    <source>
        <dbReference type="PROSITE-ProRule" id="PRU01228"/>
    </source>
</evidence>
<name>SYT_BRUC2</name>
<accession>A9M582</accession>
<proteinExistence type="inferred from homology"/>
<dbReference type="EC" id="6.1.1.3" evidence="1"/>
<dbReference type="EMBL" id="CP000872">
    <property type="protein sequence ID" value="ABX62137.1"/>
    <property type="molecule type" value="Genomic_DNA"/>
</dbReference>
<dbReference type="RefSeq" id="WP_004688376.1">
    <property type="nucleotide sequence ID" value="NC_010103.1"/>
</dbReference>
<dbReference type="SMR" id="A9M582"/>
<dbReference type="GeneID" id="55590759"/>
<dbReference type="KEGG" id="bcs:BCAN_A1086"/>
<dbReference type="HOGENOM" id="CLU_008554_0_1_5"/>
<dbReference type="Proteomes" id="UP000001385">
    <property type="component" value="Chromosome I"/>
</dbReference>
<dbReference type="GO" id="GO:0005829">
    <property type="term" value="C:cytosol"/>
    <property type="evidence" value="ECO:0007669"/>
    <property type="project" value="TreeGrafter"/>
</dbReference>
<dbReference type="GO" id="GO:0005524">
    <property type="term" value="F:ATP binding"/>
    <property type="evidence" value="ECO:0007669"/>
    <property type="project" value="UniProtKB-UniRule"/>
</dbReference>
<dbReference type="GO" id="GO:0046872">
    <property type="term" value="F:metal ion binding"/>
    <property type="evidence" value="ECO:0007669"/>
    <property type="project" value="UniProtKB-KW"/>
</dbReference>
<dbReference type="GO" id="GO:0004829">
    <property type="term" value="F:threonine-tRNA ligase activity"/>
    <property type="evidence" value="ECO:0007669"/>
    <property type="project" value="UniProtKB-UniRule"/>
</dbReference>
<dbReference type="GO" id="GO:0000049">
    <property type="term" value="F:tRNA binding"/>
    <property type="evidence" value="ECO:0007669"/>
    <property type="project" value="UniProtKB-KW"/>
</dbReference>
<dbReference type="GO" id="GO:0006435">
    <property type="term" value="P:threonyl-tRNA aminoacylation"/>
    <property type="evidence" value="ECO:0007669"/>
    <property type="project" value="UniProtKB-UniRule"/>
</dbReference>
<dbReference type="CDD" id="cd01667">
    <property type="entry name" value="TGS_ThrRS"/>
    <property type="match status" value="1"/>
</dbReference>
<dbReference type="CDD" id="cd00860">
    <property type="entry name" value="ThrRS_anticodon"/>
    <property type="match status" value="1"/>
</dbReference>
<dbReference type="CDD" id="cd00771">
    <property type="entry name" value="ThrRS_core"/>
    <property type="match status" value="1"/>
</dbReference>
<dbReference type="FunFam" id="3.30.54.20:FF:000002">
    <property type="entry name" value="Threonine--tRNA ligase"/>
    <property type="match status" value="1"/>
</dbReference>
<dbReference type="FunFam" id="3.30.930.10:FF:000002">
    <property type="entry name" value="Threonine--tRNA ligase"/>
    <property type="match status" value="1"/>
</dbReference>
<dbReference type="FunFam" id="3.40.50.800:FF:000001">
    <property type="entry name" value="Threonine--tRNA ligase"/>
    <property type="match status" value="1"/>
</dbReference>
<dbReference type="FunFam" id="3.30.980.10:FF:000005">
    <property type="entry name" value="Threonyl-tRNA synthetase, mitochondrial"/>
    <property type="match status" value="1"/>
</dbReference>
<dbReference type="Gene3D" id="3.10.20.30">
    <property type="match status" value="1"/>
</dbReference>
<dbReference type="Gene3D" id="3.30.54.20">
    <property type="match status" value="1"/>
</dbReference>
<dbReference type="Gene3D" id="3.40.50.800">
    <property type="entry name" value="Anticodon-binding domain"/>
    <property type="match status" value="1"/>
</dbReference>
<dbReference type="Gene3D" id="3.30.930.10">
    <property type="entry name" value="Bira Bifunctional Protein, Domain 2"/>
    <property type="match status" value="1"/>
</dbReference>
<dbReference type="Gene3D" id="3.30.980.10">
    <property type="entry name" value="Threonyl-trna Synthetase, Chain A, domain 2"/>
    <property type="match status" value="1"/>
</dbReference>
<dbReference type="HAMAP" id="MF_00184">
    <property type="entry name" value="Thr_tRNA_synth"/>
    <property type="match status" value="1"/>
</dbReference>
<dbReference type="InterPro" id="IPR002314">
    <property type="entry name" value="aa-tRNA-synt_IIb"/>
</dbReference>
<dbReference type="InterPro" id="IPR006195">
    <property type="entry name" value="aa-tRNA-synth_II"/>
</dbReference>
<dbReference type="InterPro" id="IPR045864">
    <property type="entry name" value="aa-tRNA-synth_II/BPL/LPL"/>
</dbReference>
<dbReference type="InterPro" id="IPR004154">
    <property type="entry name" value="Anticodon-bd"/>
</dbReference>
<dbReference type="InterPro" id="IPR036621">
    <property type="entry name" value="Anticodon-bd_dom_sf"/>
</dbReference>
<dbReference type="InterPro" id="IPR012675">
    <property type="entry name" value="Beta-grasp_dom_sf"/>
</dbReference>
<dbReference type="InterPro" id="IPR004095">
    <property type="entry name" value="TGS"/>
</dbReference>
<dbReference type="InterPro" id="IPR012676">
    <property type="entry name" value="TGS-like"/>
</dbReference>
<dbReference type="InterPro" id="IPR002320">
    <property type="entry name" value="Thr-tRNA-ligase_IIa"/>
</dbReference>
<dbReference type="InterPro" id="IPR018163">
    <property type="entry name" value="Thr/Ala-tRNA-synth_IIc_edit"/>
</dbReference>
<dbReference type="InterPro" id="IPR047246">
    <property type="entry name" value="ThrRS_anticodon"/>
</dbReference>
<dbReference type="InterPro" id="IPR033728">
    <property type="entry name" value="ThrRS_core"/>
</dbReference>
<dbReference type="InterPro" id="IPR012947">
    <property type="entry name" value="tRNA_SAD"/>
</dbReference>
<dbReference type="NCBIfam" id="TIGR00418">
    <property type="entry name" value="thrS"/>
    <property type="match status" value="1"/>
</dbReference>
<dbReference type="PANTHER" id="PTHR11451:SF44">
    <property type="entry name" value="THREONINE--TRNA LIGASE, CHLOROPLASTIC_MITOCHONDRIAL 2"/>
    <property type="match status" value="1"/>
</dbReference>
<dbReference type="PANTHER" id="PTHR11451">
    <property type="entry name" value="THREONINE-TRNA LIGASE"/>
    <property type="match status" value="1"/>
</dbReference>
<dbReference type="Pfam" id="PF03129">
    <property type="entry name" value="HGTP_anticodon"/>
    <property type="match status" value="1"/>
</dbReference>
<dbReference type="Pfam" id="PF02824">
    <property type="entry name" value="TGS"/>
    <property type="match status" value="1"/>
</dbReference>
<dbReference type="Pfam" id="PF00587">
    <property type="entry name" value="tRNA-synt_2b"/>
    <property type="match status" value="1"/>
</dbReference>
<dbReference type="Pfam" id="PF07973">
    <property type="entry name" value="tRNA_SAD"/>
    <property type="match status" value="1"/>
</dbReference>
<dbReference type="PRINTS" id="PR01047">
    <property type="entry name" value="TRNASYNTHTHR"/>
</dbReference>
<dbReference type="SMART" id="SM00863">
    <property type="entry name" value="tRNA_SAD"/>
    <property type="match status" value="1"/>
</dbReference>
<dbReference type="SUPFAM" id="SSF52954">
    <property type="entry name" value="Class II aaRS ABD-related"/>
    <property type="match status" value="1"/>
</dbReference>
<dbReference type="SUPFAM" id="SSF55681">
    <property type="entry name" value="Class II aaRS and biotin synthetases"/>
    <property type="match status" value="1"/>
</dbReference>
<dbReference type="SUPFAM" id="SSF81271">
    <property type="entry name" value="TGS-like"/>
    <property type="match status" value="1"/>
</dbReference>
<dbReference type="SUPFAM" id="SSF55186">
    <property type="entry name" value="ThrRS/AlaRS common domain"/>
    <property type="match status" value="1"/>
</dbReference>
<dbReference type="PROSITE" id="PS50862">
    <property type="entry name" value="AA_TRNA_LIGASE_II"/>
    <property type="match status" value="1"/>
</dbReference>
<dbReference type="PROSITE" id="PS51880">
    <property type="entry name" value="TGS"/>
    <property type="match status" value="1"/>
</dbReference>
<reference key="1">
    <citation type="submission" date="2007-10" db="EMBL/GenBank/DDBJ databases">
        <title>Brucella canis ATCC 23365 whole genome shotgun sequencing project.</title>
        <authorList>
            <person name="Setubal J.C."/>
            <person name="Bowns C."/>
            <person name="Boyle S."/>
            <person name="Crasta O.R."/>
            <person name="Czar M.J."/>
            <person name="Dharmanolla C."/>
            <person name="Gillespie J.J."/>
            <person name="Kenyon R.W."/>
            <person name="Lu J."/>
            <person name="Mane S."/>
            <person name="Mohapatra S."/>
            <person name="Nagrani S."/>
            <person name="Purkayastha A."/>
            <person name="Rajasimha H.K."/>
            <person name="Shallom J.M."/>
            <person name="Shallom S."/>
            <person name="Shukla M."/>
            <person name="Snyder E.E."/>
            <person name="Sobral B.W."/>
            <person name="Wattam A.R."/>
            <person name="Will R."/>
            <person name="Williams K."/>
            <person name="Yoo H."/>
            <person name="Bruce D."/>
            <person name="Detter C."/>
            <person name="Munk C."/>
            <person name="Brettin T.S."/>
        </authorList>
    </citation>
    <scope>NUCLEOTIDE SEQUENCE [LARGE SCALE GENOMIC DNA]</scope>
    <source>
        <strain>ATCC 23365 / NCTC 10854 / RM-666</strain>
    </source>
</reference>
<keyword id="KW-0030">Aminoacyl-tRNA synthetase</keyword>
<keyword id="KW-0067">ATP-binding</keyword>
<keyword id="KW-0963">Cytoplasm</keyword>
<keyword id="KW-0436">Ligase</keyword>
<keyword id="KW-0479">Metal-binding</keyword>
<keyword id="KW-0547">Nucleotide-binding</keyword>
<keyword id="KW-0648">Protein biosynthesis</keyword>
<keyword id="KW-1185">Reference proteome</keyword>
<keyword id="KW-0694">RNA-binding</keyword>
<keyword id="KW-0820">tRNA-binding</keyword>
<keyword id="KW-0862">Zinc</keyword>
<organism>
    <name type="scientific">Brucella canis (strain ATCC 23365 / NCTC 10854 / RM-666)</name>
    <dbReference type="NCBI Taxonomy" id="483179"/>
    <lineage>
        <taxon>Bacteria</taxon>
        <taxon>Pseudomonadati</taxon>
        <taxon>Pseudomonadota</taxon>
        <taxon>Alphaproteobacteria</taxon>
        <taxon>Hyphomicrobiales</taxon>
        <taxon>Brucellaceae</taxon>
        <taxon>Brucella/Ochrobactrum group</taxon>
        <taxon>Brucella</taxon>
    </lineage>
</organism>
<gene>
    <name evidence="1" type="primary">thrS</name>
    <name type="ordered locus">BCAN_A1086</name>
</gene>
<sequence>MSNTVSLQFPDGSVREYDASMTGAALAESISKSLAKKAVAYAVDGTVRDLSDPLGASGKVEIITREDPRALELIRHDTAHVLAEAVQELFPGTQVTIGPVIENGFYYDFARNEPFTLDDLPVIEKKMREIIQRNKPFTKEVWSREKAKQVFSDKGESYKVELVDAIPAGQDLKIYYQGDWFDLCRGPHMASTGQIGNSFKLMKVAGAYWRGDANNPMLTRIYGTAFANDNDLQAYLHMLEEAEKRDHRRLGREMDLFHFQEEGPGVVFWHAKGWKMFQNLVSYMRRRLDSHGYQEVNAPQVLDKSLWETSGHWGWYRDNMFKVTVAGDDTDDDRVFALKPMNCPGHVQIFKHGLKSYRDLPIKLAEFGNVHRYEPSGALHGLMRVRGFTQDDAHIFCTEEQMAAECLRINDLILSVYKDFGFEEITIKLSTRPEKRVGSDELWDRAESVMMTVLEQIRQQSNNIKTGILPGEGAFYGPKFEYTLKDAIGREWQCGTTQVDFNLPERFGAFYIGADSEKKQPVMIHRAICGSMERFLGILIENFAGHMPLWFAPVQVVVATITSDADEYAKEAAAKLKAAGLQVVTDLRNEKINYKVREHSLQKVPVILVCGKREAEEKTVNMRRLGSRDQESMTLDEAIARLCEEATPPDLLRLKNAG</sequence>
<protein>
    <recommendedName>
        <fullName evidence="1">Threonine--tRNA ligase</fullName>
        <ecNumber evidence="1">6.1.1.3</ecNumber>
    </recommendedName>
    <alternativeName>
        <fullName evidence="1">Threonyl-tRNA synthetase</fullName>
        <shortName evidence="1">ThrRS</shortName>
    </alternativeName>
</protein>
<comment type="function">
    <text evidence="1">Catalyzes the attachment of threonine to tRNA(Thr) in a two-step reaction: L-threonine is first activated by ATP to form Thr-AMP and then transferred to the acceptor end of tRNA(Thr). Also edits incorrectly charged L-seryl-tRNA(Thr).</text>
</comment>
<comment type="catalytic activity">
    <reaction evidence="1">
        <text>tRNA(Thr) + L-threonine + ATP = L-threonyl-tRNA(Thr) + AMP + diphosphate + H(+)</text>
        <dbReference type="Rhea" id="RHEA:24624"/>
        <dbReference type="Rhea" id="RHEA-COMP:9670"/>
        <dbReference type="Rhea" id="RHEA-COMP:9704"/>
        <dbReference type="ChEBI" id="CHEBI:15378"/>
        <dbReference type="ChEBI" id="CHEBI:30616"/>
        <dbReference type="ChEBI" id="CHEBI:33019"/>
        <dbReference type="ChEBI" id="CHEBI:57926"/>
        <dbReference type="ChEBI" id="CHEBI:78442"/>
        <dbReference type="ChEBI" id="CHEBI:78534"/>
        <dbReference type="ChEBI" id="CHEBI:456215"/>
        <dbReference type="EC" id="6.1.1.3"/>
    </reaction>
</comment>
<comment type="cofactor">
    <cofactor evidence="1">
        <name>Zn(2+)</name>
        <dbReference type="ChEBI" id="CHEBI:29105"/>
    </cofactor>
    <text evidence="1">Binds 1 zinc ion per subunit.</text>
</comment>
<comment type="subunit">
    <text evidence="1">Homodimer.</text>
</comment>
<comment type="subcellular location">
    <subcellularLocation>
        <location evidence="1">Cytoplasm</location>
    </subcellularLocation>
</comment>
<comment type="similarity">
    <text evidence="1">Belongs to the class-II aminoacyl-tRNA synthetase family.</text>
</comment>